<feature type="chain" id="PRO_1000115454" description="ATP-dependent Clp protease adapter protein ClpS">
    <location>
        <begin position="1"/>
        <end position="108"/>
    </location>
</feature>
<reference key="1">
    <citation type="journal article" date="2008" name="Genome Res.">
        <title>Genome sequence of the beta-rhizobium Cupriavidus taiwanensis and comparative genomics of rhizobia.</title>
        <authorList>
            <person name="Amadou C."/>
            <person name="Pascal G."/>
            <person name="Mangenot S."/>
            <person name="Glew M."/>
            <person name="Bontemps C."/>
            <person name="Capela D."/>
            <person name="Carrere S."/>
            <person name="Cruveiller S."/>
            <person name="Dossat C."/>
            <person name="Lajus A."/>
            <person name="Marchetti M."/>
            <person name="Poinsot V."/>
            <person name="Rouy Z."/>
            <person name="Servin B."/>
            <person name="Saad M."/>
            <person name="Schenowitz C."/>
            <person name="Barbe V."/>
            <person name="Batut J."/>
            <person name="Medigue C."/>
            <person name="Masson-Boivin C."/>
        </authorList>
    </citation>
    <scope>NUCLEOTIDE SEQUENCE [LARGE SCALE GENOMIC DNA]</scope>
    <source>
        <strain>DSM 17343 / BCRC 17206 / CCUG 44338 / CIP 107171 / LMG 19424 / R1</strain>
    </source>
</reference>
<name>CLPS_CUPTR</name>
<protein>
    <recommendedName>
        <fullName evidence="1">ATP-dependent Clp protease adapter protein ClpS</fullName>
    </recommendedName>
</protein>
<proteinExistence type="inferred from homology"/>
<evidence type="ECO:0000255" key="1">
    <source>
        <dbReference type="HAMAP-Rule" id="MF_00302"/>
    </source>
</evidence>
<gene>
    <name evidence="1" type="primary">clpS</name>
    <name type="ordered locus">RALTA_A2528</name>
</gene>
<accession>B3R6C0</accession>
<sequence length="108" mass="12204">MATRLANVPQREAGTILERKEQALKPPAMFKVVLLNDDYTPMEFVVMILQQYFSRDRETATQIMLTVHREGKGVCGIYTRDIAATKVELVSTHARQAGHPLQCVMEEA</sequence>
<dbReference type="EMBL" id="CU633749">
    <property type="protein sequence ID" value="CAQ70459.1"/>
    <property type="molecule type" value="Genomic_DNA"/>
</dbReference>
<dbReference type="RefSeq" id="WP_010814998.1">
    <property type="nucleotide sequence ID" value="NC_010528.1"/>
</dbReference>
<dbReference type="SMR" id="B3R6C0"/>
<dbReference type="GeneID" id="34310694"/>
<dbReference type="KEGG" id="cti:RALTA_A2528"/>
<dbReference type="eggNOG" id="COG2127">
    <property type="taxonomic scope" value="Bacteria"/>
</dbReference>
<dbReference type="HOGENOM" id="CLU_134358_2_1_4"/>
<dbReference type="BioCyc" id="CTAI977880:RALTA_RS12290-MONOMER"/>
<dbReference type="Proteomes" id="UP000001692">
    <property type="component" value="Chromosome 1"/>
</dbReference>
<dbReference type="GO" id="GO:0030163">
    <property type="term" value="P:protein catabolic process"/>
    <property type="evidence" value="ECO:0007669"/>
    <property type="project" value="InterPro"/>
</dbReference>
<dbReference type="GO" id="GO:0006508">
    <property type="term" value="P:proteolysis"/>
    <property type="evidence" value="ECO:0007669"/>
    <property type="project" value="UniProtKB-UniRule"/>
</dbReference>
<dbReference type="FunFam" id="3.30.1390.10:FF:000002">
    <property type="entry name" value="ATP-dependent Clp protease adapter protein ClpS"/>
    <property type="match status" value="1"/>
</dbReference>
<dbReference type="Gene3D" id="3.30.1390.10">
    <property type="match status" value="1"/>
</dbReference>
<dbReference type="HAMAP" id="MF_00302">
    <property type="entry name" value="ClpS"/>
    <property type="match status" value="1"/>
</dbReference>
<dbReference type="InterPro" id="IPR022935">
    <property type="entry name" value="ClpS"/>
</dbReference>
<dbReference type="InterPro" id="IPR003769">
    <property type="entry name" value="ClpS_core"/>
</dbReference>
<dbReference type="InterPro" id="IPR014719">
    <property type="entry name" value="Ribosomal_bL12_C/ClpS-like"/>
</dbReference>
<dbReference type="NCBIfam" id="NF000672">
    <property type="entry name" value="PRK00033.1-5"/>
    <property type="match status" value="1"/>
</dbReference>
<dbReference type="PANTHER" id="PTHR33473:SF19">
    <property type="entry name" value="ATP-DEPENDENT CLP PROTEASE ADAPTER PROTEIN CLPS"/>
    <property type="match status" value="1"/>
</dbReference>
<dbReference type="PANTHER" id="PTHR33473">
    <property type="entry name" value="ATP-DEPENDENT CLP PROTEASE ADAPTER PROTEIN CLPS1, CHLOROPLASTIC"/>
    <property type="match status" value="1"/>
</dbReference>
<dbReference type="Pfam" id="PF02617">
    <property type="entry name" value="ClpS"/>
    <property type="match status" value="1"/>
</dbReference>
<dbReference type="SUPFAM" id="SSF54736">
    <property type="entry name" value="ClpS-like"/>
    <property type="match status" value="1"/>
</dbReference>
<organism>
    <name type="scientific">Cupriavidus taiwanensis (strain DSM 17343 / BCRC 17206 / CCUG 44338 / CIP 107171 / LMG 19424 / R1)</name>
    <name type="common">Ralstonia taiwanensis (strain LMG 19424)</name>
    <dbReference type="NCBI Taxonomy" id="977880"/>
    <lineage>
        <taxon>Bacteria</taxon>
        <taxon>Pseudomonadati</taxon>
        <taxon>Pseudomonadota</taxon>
        <taxon>Betaproteobacteria</taxon>
        <taxon>Burkholderiales</taxon>
        <taxon>Burkholderiaceae</taxon>
        <taxon>Cupriavidus</taxon>
    </lineage>
</organism>
<comment type="function">
    <text evidence="1">Involved in the modulation of the specificity of the ClpAP-mediated ATP-dependent protein degradation.</text>
</comment>
<comment type="subunit">
    <text evidence="1">Binds to the N-terminal domain of the chaperone ClpA.</text>
</comment>
<comment type="similarity">
    <text evidence="1">Belongs to the ClpS family.</text>
</comment>